<evidence type="ECO:0000255" key="1">
    <source>
        <dbReference type="HAMAP-Rule" id="MF_00657"/>
    </source>
</evidence>
<sequence>MILTIDEVLTAEELAEMKDVLATADFVDGKTTAGWHAKLVKNNTQLAGKAACSMDLKERVKSALLRHPLFKVAIQPRSIHTLLFSRYQEGMSYGDHVDNAFMGGARSDVSFTLFLNAPEDYTGGELCVELADGVHTYKLAAGSAIAYPSSTIHRVETVTSGTRLVAVGWVQSLVRDVQQRELLFDLDTARRSLFATHGKTPEFDLISKSHANLLRQWAE</sequence>
<accession>B0C4F3</accession>
<keyword id="KW-0223">Dioxygenase</keyword>
<keyword id="KW-0408">Iron</keyword>
<keyword id="KW-0479">Metal-binding</keyword>
<keyword id="KW-0560">Oxidoreductase</keyword>
<keyword id="KW-1185">Reference proteome</keyword>
<keyword id="KW-0847">Vitamin C</keyword>
<feature type="chain" id="PRO_0000346456" description="PKHD-type hydroxylase AM1_3707">
    <location>
        <begin position="1"/>
        <end position="219"/>
    </location>
</feature>
<feature type="domain" description="Fe2OG dioxygenase" evidence="1">
    <location>
        <begin position="78"/>
        <end position="172"/>
    </location>
</feature>
<feature type="binding site" evidence="1">
    <location>
        <position position="96"/>
    </location>
    <ligand>
        <name>Fe cation</name>
        <dbReference type="ChEBI" id="CHEBI:24875"/>
    </ligand>
</feature>
<feature type="binding site" evidence="1">
    <location>
        <position position="98"/>
    </location>
    <ligand>
        <name>Fe cation</name>
        <dbReference type="ChEBI" id="CHEBI:24875"/>
    </ligand>
</feature>
<feature type="binding site" evidence="1">
    <location>
        <position position="153"/>
    </location>
    <ligand>
        <name>Fe cation</name>
        <dbReference type="ChEBI" id="CHEBI:24875"/>
    </ligand>
</feature>
<feature type="binding site" evidence="1">
    <location>
        <position position="163"/>
    </location>
    <ligand>
        <name>2-oxoglutarate</name>
        <dbReference type="ChEBI" id="CHEBI:16810"/>
    </ligand>
</feature>
<protein>
    <recommendedName>
        <fullName evidence="1">PKHD-type hydroxylase AM1_3707</fullName>
        <ecNumber evidence="1">1.14.11.-</ecNumber>
    </recommendedName>
</protein>
<reference key="1">
    <citation type="journal article" date="2008" name="Proc. Natl. Acad. Sci. U.S.A.">
        <title>Niche adaptation and genome expansion in the chlorophyll d-producing cyanobacterium Acaryochloris marina.</title>
        <authorList>
            <person name="Swingley W.D."/>
            <person name="Chen M."/>
            <person name="Cheung P.C."/>
            <person name="Conrad A.L."/>
            <person name="Dejesa L.C."/>
            <person name="Hao J."/>
            <person name="Honchak B.M."/>
            <person name="Karbach L.E."/>
            <person name="Kurdoglu A."/>
            <person name="Lahiri S."/>
            <person name="Mastrian S.D."/>
            <person name="Miyashita H."/>
            <person name="Page L."/>
            <person name="Ramakrishna P."/>
            <person name="Satoh S."/>
            <person name="Sattley W.M."/>
            <person name="Shimada Y."/>
            <person name="Taylor H.L."/>
            <person name="Tomo T."/>
            <person name="Tsuchiya T."/>
            <person name="Wang Z.T."/>
            <person name="Raymond J."/>
            <person name="Mimuro M."/>
            <person name="Blankenship R.E."/>
            <person name="Touchman J.W."/>
        </authorList>
    </citation>
    <scope>NUCLEOTIDE SEQUENCE [LARGE SCALE GENOMIC DNA]</scope>
    <source>
        <strain>MBIC 11017</strain>
    </source>
</reference>
<comment type="cofactor">
    <cofactor evidence="1">
        <name>Fe(2+)</name>
        <dbReference type="ChEBI" id="CHEBI:29033"/>
    </cofactor>
    <text evidence="1">Binds 1 Fe(2+) ion per subunit.</text>
</comment>
<comment type="cofactor">
    <cofactor evidence="1">
        <name>L-ascorbate</name>
        <dbReference type="ChEBI" id="CHEBI:38290"/>
    </cofactor>
</comment>
<proteinExistence type="inferred from homology"/>
<name>Y3707_ACAM1</name>
<gene>
    <name type="ordered locus">AM1_3707</name>
</gene>
<dbReference type="EC" id="1.14.11.-" evidence="1"/>
<dbReference type="EMBL" id="CP000828">
    <property type="protein sequence ID" value="ABW28697.1"/>
    <property type="molecule type" value="Genomic_DNA"/>
</dbReference>
<dbReference type="RefSeq" id="WP_012164077.1">
    <property type="nucleotide sequence ID" value="NC_009925.1"/>
</dbReference>
<dbReference type="SMR" id="B0C4F3"/>
<dbReference type="STRING" id="329726.AM1_3707"/>
<dbReference type="KEGG" id="amr:AM1_3707"/>
<dbReference type="eggNOG" id="COG3128">
    <property type="taxonomic scope" value="Bacteria"/>
</dbReference>
<dbReference type="HOGENOM" id="CLU_106663_0_0_3"/>
<dbReference type="OrthoDB" id="9812472at2"/>
<dbReference type="Proteomes" id="UP000000268">
    <property type="component" value="Chromosome"/>
</dbReference>
<dbReference type="GO" id="GO:0016706">
    <property type="term" value="F:2-oxoglutarate-dependent dioxygenase activity"/>
    <property type="evidence" value="ECO:0007669"/>
    <property type="project" value="UniProtKB-UniRule"/>
</dbReference>
<dbReference type="GO" id="GO:0005506">
    <property type="term" value="F:iron ion binding"/>
    <property type="evidence" value="ECO:0007669"/>
    <property type="project" value="UniProtKB-UniRule"/>
</dbReference>
<dbReference type="GO" id="GO:0031418">
    <property type="term" value="F:L-ascorbic acid binding"/>
    <property type="evidence" value="ECO:0007669"/>
    <property type="project" value="UniProtKB-KW"/>
</dbReference>
<dbReference type="GO" id="GO:0006974">
    <property type="term" value="P:DNA damage response"/>
    <property type="evidence" value="ECO:0007669"/>
    <property type="project" value="TreeGrafter"/>
</dbReference>
<dbReference type="GO" id="GO:0006879">
    <property type="term" value="P:intracellular iron ion homeostasis"/>
    <property type="evidence" value="ECO:0007669"/>
    <property type="project" value="TreeGrafter"/>
</dbReference>
<dbReference type="Gene3D" id="2.60.120.620">
    <property type="entry name" value="q2cbj1_9rhob like domain"/>
    <property type="match status" value="1"/>
</dbReference>
<dbReference type="Gene3D" id="4.10.860.20">
    <property type="entry name" value="Rabenosyn, Rab binding domain"/>
    <property type="match status" value="1"/>
</dbReference>
<dbReference type="HAMAP" id="MF_00657">
    <property type="entry name" value="Hydroxyl_YbiX"/>
    <property type="match status" value="1"/>
</dbReference>
<dbReference type="InterPro" id="IPR005123">
    <property type="entry name" value="Oxoglu/Fe-dep_dioxygenase_dom"/>
</dbReference>
<dbReference type="InterPro" id="IPR041097">
    <property type="entry name" value="PKHD_C"/>
</dbReference>
<dbReference type="InterPro" id="IPR023550">
    <property type="entry name" value="PKHD_hydroxylase"/>
</dbReference>
<dbReference type="InterPro" id="IPR006620">
    <property type="entry name" value="Pro_4_hyd_alph"/>
</dbReference>
<dbReference type="InterPro" id="IPR044862">
    <property type="entry name" value="Pro_4_hyd_alph_FE2OG_OXY"/>
</dbReference>
<dbReference type="NCBIfam" id="NF003974">
    <property type="entry name" value="PRK05467.1-3"/>
    <property type="match status" value="1"/>
</dbReference>
<dbReference type="NCBIfam" id="NF003975">
    <property type="entry name" value="PRK05467.1-4"/>
    <property type="match status" value="1"/>
</dbReference>
<dbReference type="PANTHER" id="PTHR41536">
    <property type="entry name" value="PKHD-TYPE HYDROXYLASE YBIX"/>
    <property type="match status" value="1"/>
</dbReference>
<dbReference type="PANTHER" id="PTHR41536:SF1">
    <property type="entry name" value="PKHD-TYPE HYDROXYLASE YBIX"/>
    <property type="match status" value="1"/>
</dbReference>
<dbReference type="Pfam" id="PF13640">
    <property type="entry name" value="2OG-FeII_Oxy_3"/>
    <property type="match status" value="1"/>
</dbReference>
<dbReference type="Pfam" id="PF18331">
    <property type="entry name" value="PKHD_C"/>
    <property type="match status" value="1"/>
</dbReference>
<dbReference type="SMART" id="SM00702">
    <property type="entry name" value="P4Hc"/>
    <property type="match status" value="1"/>
</dbReference>
<dbReference type="PROSITE" id="PS51471">
    <property type="entry name" value="FE2OG_OXY"/>
    <property type="match status" value="1"/>
</dbReference>
<organism>
    <name type="scientific">Acaryochloris marina (strain MBIC 11017)</name>
    <dbReference type="NCBI Taxonomy" id="329726"/>
    <lineage>
        <taxon>Bacteria</taxon>
        <taxon>Bacillati</taxon>
        <taxon>Cyanobacteriota</taxon>
        <taxon>Cyanophyceae</taxon>
        <taxon>Acaryochloridales</taxon>
        <taxon>Acaryochloridaceae</taxon>
        <taxon>Acaryochloris</taxon>
    </lineage>
</organism>